<name>ATPB_CANLF</name>
<protein>
    <recommendedName>
        <fullName evidence="2">ATP synthase F(1) complex catalytic subunit beta, mitochondrial</fullName>
        <ecNumber evidence="2">7.1.2.2</ecNumber>
    </recommendedName>
    <alternativeName>
        <fullName evidence="2">ATP synthase F1 subunit beta</fullName>
    </alternativeName>
</protein>
<organism>
    <name type="scientific">Canis lupus familiaris</name>
    <name type="common">Dog</name>
    <name type="synonym">Canis familiaris</name>
    <dbReference type="NCBI Taxonomy" id="9615"/>
    <lineage>
        <taxon>Eukaryota</taxon>
        <taxon>Metazoa</taxon>
        <taxon>Chordata</taxon>
        <taxon>Craniata</taxon>
        <taxon>Vertebrata</taxon>
        <taxon>Euteleostomi</taxon>
        <taxon>Mammalia</taxon>
        <taxon>Eutheria</taxon>
        <taxon>Laurasiatheria</taxon>
        <taxon>Carnivora</taxon>
        <taxon>Caniformia</taxon>
        <taxon>Canidae</taxon>
        <taxon>Canis</taxon>
    </lineage>
</organism>
<evidence type="ECO:0000250" key="1">
    <source>
        <dbReference type="UniProtKB" id="P00829"/>
    </source>
</evidence>
<evidence type="ECO:0000250" key="2">
    <source>
        <dbReference type="UniProtKB" id="P06576"/>
    </source>
</evidence>
<evidence type="ECO:0000250" key="3">
    <source>
        <dbReference type="UniProtKB" id="P10719"/>
    </source>
</evidence>
<evidence type="ECO:0000250" key="4">
    <source>
        <dbReference type="UniProtKB" id="P19483"/>
    </source>
</evidence>
<evidence type="ECO:0000250" key="5">
    <source>
        <dbReference type="UniProtKB" id="P56480"/>
    </source>
</evidence>
<evidence type="ECO:0000255" key="6"/>
<evidence type="ECO:0000256" key="7">
    <source>
        <dbReference type="SAM" id="MobiDB-lite"/>
    </source>
</evidence>
<evidence type="ECO:0000305" key="8"/>
<comment type="function">
    <text evidence="2 4">Catalytic subunit beta, of the mitochondrial membrane ATP synthase complex (F(1)F(0) ATP synthase or Complex V) that produces ATP from ADP in the presence of a proton gradient across the membrane which is generated by electron transport complexes of the respiratory chain. ATP synthase complex consist of a soluble F(1) head domain - the catalytic core - and a membrane F(1) domain - the membrane proton channel. These two domains are linked by a central stalk rotating inside the F(1) region and a stationary peripheral stalk. During catalysis, ATP synthesis in the catalytic domain of F(1) is coupled via a rotary mechanism of the central stalk subunits to proton translocation (By similarity). In vivo, can only synthesize ATP although its ATP hydrolase activity can be activated artificially in vitro (By similarity). With the subunit alpha (ATP5F1A), forms the catalytic core in the F(1) domain (By similarity).</text>
</comment>
<comment type="catalytic activity">
    <reaction evidence="1">
        <text>ATP + H2O + 4 H(+)(in) = ADP + phosphate + 5 H(+)(out)</text>
        <dbReference type="Rhea" id="RHEA:57720"/>
        <dbReference type="ChEBI" id="CHEBI:15377"/>
        <dbReference type="ChEBI" id="CHEBI:15378"/>
        <dbReference type="ChEBI" id="CHEBI:30616"/>
        <dbReference type="ChEBI" id="CHEBI:43474"/>
        <dbReference type="ChEBI" id="CHEBI:456216"/>
        <dbReference type="EC" id="7.1.2.2"/>
    </reaction>
    <physiologicalReaction direction="right-to-left" evidence="1">
        <dbReference type="Rhea" id="RHEA:57722"/>
    </physiologicalReaction>
</comment>
<comment type="subunit">
    <text evidence="2 3 5">Homotrimer. Component of the ATP synthase complex composed at least of ATP5F1A/subunit alpha, ATP5F1B/subunit beta, ATP5MC1/subunit c (homooctomer), MT-ATP6/subunit a, MT-ATP8/subunit 8, ATP5ME/subunit e, ATP5MF/subunit f, ATP5MG/subunit g, ATP5MK/subunit k, ATP5MJ/subunit j, ATP5F1C/subunit gamma, ATP5F1D/subunit delta, ATP5F1E/subunit epsilon, ATP5PF/subunit F6, ATP5PB/subunit b, ATP5PD/subunit d, ATP5PO/subunit OSCP. ATP synthase complex consists of a soluble F(1) head domain (subunits alpha(3) and beta(3)) - the catalytic core - and a membrane F(0) domain - the membrane proton channel (subunits c, a, 8, e, f, g, k and j). These two domains are linked by a central stalk (subunits gamma, delta, and epsilon) rotating inside the F1 region and a stationary peripheral stalk (subunits F6, b, d, and OSCP) (By similarity). Interacts with PPIF (By similarity). Interacts with BCL2L1 isoform BCL-X(L); the interaction mediates the association of BCL2L1 isoform BCL-X(L) with the mitochondrial membrane F(1)F(0) ATP synthase and enhances neurons metabolic efficiency (By similarity). Interacts with CLN5 and PPT1. Interacts with S100A1; this interaction increases F1-ATPase activity (By similarity). Interacts with MTLN. Interacts with TTC5/STRAP; the interaction results in decreased mitochondrial ATP production (By similarity).</text>
</comment>
<comment type="subcellular location">
    <subcellularLocation>
        <location evidence="1">Mitochondrion inner membrane</location>
        <topology evidence="1">Peripheral membrane protein</topology>
        <orientation evidence="1">Matrix side</orientation>
    </subcellularLocation>
</comment>
<comment type="similarity">
    <text evidence="8">Belongs to the ATPase alpha/beta chains family.</text>
</comment>
<dbReference type="EC" id="7.1.2.2" evidence="2"/>
<dbReference type="EMBL" id="KU600035">
    <property type="protein sequence ID" value="ANW72322.1"/>
    <property type="molecule type" value="mRNA"/>
</dbReference>
<dbReference type="EMBL" id="JH373183">
    <property type="status" value="NOT_ANNOTATED_CDS"/>
    <property type="molecule type" value="Genomic_DNA"/>
</dbReference>
<dbReference type="RefSeq" id="XP_531639.2">
    <property type="nucleotide sequence ID" value="XM_531639.5"/>
</dbReference>
<dbReference type="FunCoup" id="P99504">
    <property type="interactions" value="978"/>
</dbReference>
<dbReference type="Ensembl" id="ENSCAFT00805029807">
    <property type="protein sequence ID" value="ENSCAFP00805023341"/>
    <property type="gene ID" value="ENSCAFG00805016458"/>
</dbReference>
<dbReference type="GeneID" id="403669"/>
<dbReference type="KEGG" id="cfa:403669"/>
<dbReference type="CTD" id="506"/>
<dbReference type="VEuPathDB" id="HostDB:ENSCAFG00845008893"/>
<dbReference type="InParanoid" id="P99504"/>
<dbReference type="OMA" id="GFNMIMD"/>
<dbReference type="OrthoDB" id="14523at2759"/>
<dbReference type="Reactome" id="R-CFA-1268020">
    <property type="pathway name" value="Mitochondrial protein import"/>
</dbReference>
<dbReference type="Reactome" id="R-CFA-163210">
    <property type="pathway name" value="Formation of ATP by chemiosmotic coupling"/>
</dbReference>
<dbReference type="Reactome" id="R-CFA-8949613">
    <property type="pathway name" value="Cristae formation"/>
</dbReference>
<dbReference type="Reactome" id="R-CFA-9837999">
    <property type="pathway name" value="Mitochondrial protein degradation"/>
</dbReference>
<dbReference type="Proteomes" id="UP000002254">
    <property type="component" value="Unplaced"/>
</dbReference>
<dbReference type="Proteomes" id="UP000694429">
    <property type="component" value="Unplaced"/>
</dbReference>
<dbReference type="Proteomes" id="UP000694542">
    <property type="component" value="Unplaced"/>
</dbReference>
<dbReference type="Proteomes" id="UP000805418">
    <property type="component" value="Chromosome 10"/>
</dbReference>
<dbReference type="GO" id="GO:0009986">
    <property type="term" value="C:cell surface"/>
    <property type="evidence" value="ECO:0007669"/>
    <property type="project" value="Ensembl"/>
</dbReference>
<dbReference type="GO" id="GO:0005743">
    <property type="term" value="C:mitochondrial inner membrane"/>
    <property type="evidence" value="ECO:0007669"/>
    <property type="project" value="UniProtKB-SubCell"/>
</dbReference>
<dbReference type="GO" id="GO:0031966">
    <property type="term" value="C:mitochondrial membrane"/>
    <property type="evidence" value="ECO:0007669"/>
    <property type="project" value="Ensembl"/>
</dbReference>
<dbReference type="GO" id="GO:0042645">
    <property type="term" value="C:mitochondrial nucleoid"/>
    <property type="evidence" value="ECO:0007669"/>
    <property type="project" value="Ensembl"/>
</dbReference>
<dbReference type="GO" id="GO:0005739">
    <property type="term" value="C:mitochondrion"/>
    <property type="evidence" value="ECO:0000250"/>
    <property type="project" value="UniProtKB"/>
</dbReference>
<dbReference type="GO" id="GO:0005886">
    <property type="term" value="C:plasma membrane"/>
    <property type="evidence" value="ECO:0007669"/>
    <property type="project" value="Ensembl"/>
</dbReference>
<dbReference type="GO" id="GO:0045259">
    <property type="term" value="C:proton-transporting ATP synthase complex"/>
    <property type="evidence" value="ECO:0000250"/>
    <property type="project" value="UniProtKB"/>
</dbReference>
<dbReference type="GO" id="GO:0043532">
    <property type="term" value="F:angiostatin binding"/>
    <property type="evidence" value="ECO:0007669"/>
    <property type="project" value="Ensembl"/>
</dbReference>
<dbReference type="GO" id="GO:0005524">
    <property type="term" value="F:ATP binding"/>
    <property type="evidence" value="ECO:0007669"/>
    <property type="project" value="UniProtKB-KW"/>
</dbReference>
<dbReference type="GO" id="GO:0016887">
    <property type="term" value="F:ATP hydrolysis activity"/>
    <property type="evidence" value="ECO:0007669"/>
    <property type="project" value="InterPro"/>
</dbReference>
<dbReference type="GO" id="GO:0042288">
    <property type="term" value="F:MHC class I protein binding"/>
    <property type="evidence" value="ECO:0007669"/>
    <property type="project" value="Ensembl"/>
</dbReference>
<dbReference type="GO" id="GO:0046933">
    <property type="term" value="F:proton-transporting ATP synthase activity, rotational mechanism"/>
    <property type="evidence" value="ECO:0007669"/>
    <property type="project" value="Ensembl"/>
</dbReference>
<dbReference type="GO" id="GO:0046961">
    <property type="term" value="F:proton-transporting ATPase activity, rotational mechanism"/>
    <property type="evidence" value="ECO:0007669"/>
    <property type="project" value="Ensembl"/>
</dbReference>
<dbReference type="GO" id="GO:0001525">
    <property type="term" value="P:angiogenesis"/>
    <property type="evidence" value="ECO:0007669"/>
    <property type="project" value="Ensembl"/>
</dbReference>
<dbReference type="GO" id="GO:0098761">
    <property type="term" value="P:cellular response to interleukin-7"/>
    <property type="evidence" value="ECO:0007669"/>
    <property type="project" value="Ensembl"/>
</dbReference>
<dbReference type="GO" id="GO:0006629">
    <property type="term" value="P:lipid metabolic process"/>
    <property type="evidence" value="ECO:0007669"/>
    <property type="project" value="Ensembl"/>
</dbReference>
<dbReference type="GO" id="GO:0006933">
    <property type="term" value="P:negative regulation of cell adhesion involved in substrate-bound cell migration"/>
    <property type="evidence" value="ECO:0007669"/>
    <property type="project" value="Ensembl"/>
</dbReference>
<dbReference type="GO" id="GO:0043536">
    <property type="term" value="P:positive regulation of blood vessel endothelial cell migration"/>
    <property type="evidence" value="ECO:0007669"/>
    <property type="project" value="Ensembl"/>
</dbReference>
<dbReference type="GO" id="GO:0015986">
    <property type="term" value="P:proton motive force-driven ATP synthesis"/>
    <property type="evidence" value="ECO:0000250"/>
    <property type="project" value="UniProtKB"/>
</dbReference>
<dbReference type="GO" id="GO:0042776">
    <property type="term" value="P:proton motive force-driven mitochondrial ATP synthesis"/>
    <property type="evidence" value="ECO:0000318"/>
    <property type="project" value="GO_Central"/>
</dbReference>
<dbReference type="GO" id="GO:1902600">
    <property type="term" value="P:proton transmembrane transport"/>
    <property type="evidence" value="ECO:0007669"/>
    <property type="project" value="UniProtKB-KW"/>
</dbReference>
<dbReference type="GO" id="GO:0051453">
    <property type="term" value="P:regulation of intracellular pH"/>
    <property type="evidence" value="ECO:0007669"/>
    <property type="project" value="Ensembl"/>
</dbReference>
<dbReference type="CDD" id="cd18110">
    <property type="entry name" value="ATP-synt_F1_beta_C"/>
    <property type="match status" value="1"/>
</dbReference>
<dbReference type="CDD" id="cd18115">
    <property type="entry name" value="ATP-synt_F1_beta_N"/>
    <property type="match status" value="1"/>
</dbReference>
<dbReference type="CDD" id="cd01133">
    <property type="entry name" value="F1-ATPase_beta_CD"/>
    <property type="match status" value="1"/>
</dbReference>
<dbReference type="Gene3D" id="2.40.10.170">
    <property type="match status" value="1"/>
</dbReference>
<dbReference type="Gene3D" id="1.10.1140.10">
    <property type="entry name" value="Bovine Mitochondrial F1-atpase, Atp Synthase Beta Chain, Chain D, domain 3"/>
    <property type="match status" value="1"/>
</dbReference>
<dbReference type="Gene3D" id="3.40.50.300">
    <property type="entry name" value="P-loop containing nucleotide triphosphate hydrolases"/>
    <property type="match status" value="1"/>
</dbReference>
<dbReference type="HAMAP" id="MF_01347">
    <property type="entry name" value="ATP_synth_beta_bact"/>
    <property type="match status" value="1"/>
</dbReference>
<dbReference type="InterPro" id="IPR003593">
    <property type="entry name" value="AAA+_ATPase"/>
</dbReference>
<dbReference type="InterPro" id="IPR055190">
    <property type="entry name" value="ATP-synt_VA_C"/>
</dbReference>
<dbReference type="InterPro" id="IPR005722">
    <property type="entry name" value="ATP_synth_F1_bsu"/>
</dbReference>
<dbReference type="InterPro" id="IPR020003">
    <property type="entry name" value="ATPase_a/bsu_AS"/>
</dbReference>
<dbReference type="InterPro" id="IPR050053">
    <property type="entry name" value="ATPase_alpha/beta_chains"/>
</dbReference>
<dbReference type="InterPro" id="IPR004100">
    <property type="entry name" value="ATPase_F1/V1/A1_a/bsu_N"/>
</dbReference>
<dbReference type="InterPro" id="IPR036121">
    <property type="entry name" value="ATPase_F1/V1/A1_a/bsu_N_sf"/>
</dbReference>
<dbReference type="InterPro" id="IPR000194">
    <property type="entry name" value="ATPase_F1/V1/A1_a/bsu_nucl-bd"/>
</dbReference>
<dbReference type="InterPro" id="IPR024034">
    <property type="entry name" value="ATPase_F1/V1_b/a_C"/>
</dbReference>
<dbReference type="InterPro" id="IPR027417">
    <property type="entry name" value="P-loop_NTPase"/>
</dbReference>
<dbReference type="NCBIfam" id="TIGR01039">
    <property type="entry name" value="atpD"/>
    <property type="match status" value="1"/>
</dbReference>
<dbReference type="PANTHER" id="PTHR15184">
    <property type="entry name" value="ATP SYNTHASE"/>
    <property type="match status" value="1"/>
</dbReference>
<dbReference type="PANTHER" id="PTHR15184:SF71">
    <property type="entry name" value="ATP SYNTHASE SUBUNIT BETA, MITOCHONDRIAL"/>
    <property type="match status" value="1"/>
</dbReference>
<dbReference type="Pfam" id="PF00006">
    <property type="entry name" value="ATP-synt_ab"/>
    <property type="match status" value="1"/>
</dbReference>
<dbReference type="Pfam" id="PF02874">
    <property type="entry name" value="ATP-synt_ab_N"/>
    <property type="match status" value="1"/>
</dbReference>
<dbReference type="Pfam" id="PF22919">
    <property type="entry name" value="ATP-synt_VA_C"/>
    <property type="match status" value="1"/>
</dbReference>
<dbReference type="PIRSF" id="PIRSF039072">
    <property type="entry name" value="ATPase_subunit_beta"/>
    <property type="match status" value="1"/>
</dbReference>
<dbReference type="SMART" id="SM00382">
    <property type="entry name" value="AAA"/>
    <property type="match status" value="1"/>
</dbReference>
<dbReference type="SUPFAM" id="SSF47917">
    <property type="entry name" value="C-terminal domain of alpha and beta subunits of F1 ATP synthase"/>
    <property type="match status" value="1"/>
</dbReference>
<dbReference type="SUPFAM" id="SSF50615">
    <property type="entry name" value="N-terminal domain of alpha and beta subunits of F1 ATP synthase"/>
    <property type="match status" value="1"/>
</dbReference>
<dbReference type="SUPFAM" id="SSF52540">
    <property type="entry name" value="P-loop containing nucleoside triphosphate hydrolases"/>
    <property type="match status" value="1"/>
</dbReference>
<keyword id="KW-0007">Acetylation</keyword>
<keyword id="KW-0066">ATP synthesis</keyword>
<keyword id="KW-0067">ATP-binding</keyword>
<keyword id="KW-0139">CF(1)</keyword>
<keyword id="KW-0903">Direct protein sequencing</keyword>
<keyword id="KW-0375">Hydrogen ion transport</keyword>
<keyword id="KW-0406">Ion transport</keyword>
<keyword id="KW-0460">Magnesium</keyword>
<keyword id="KW-0472">Membrane</keyword>
<keyword id="KW-0479">Metal-binding</keyword>
<keyword id="KW-0496">Mitochondrion</keyword>
<keyword id="KW-0999">Mitochondrion inner membrane</keyword>
<keyword id="KW-0547">Nucleotide-binding</keyword>
<keyword id="KW-0597">Phosphoprotein</keyword>
<keyword id="KW-1185">Reference proteome</keyword>
<keyword id="KW-0809">Transit peptide</keyword>
<keyword id="KW-1278">Translocase</keyword>
<keyword id="KW-0813">Transport</keyword>
<reference key="1">
    <citation type="submission" date="2016-01" db="EMBL/GenBank/DDBJ databases">
        <authorList>
            <person name="Oliw E.H."/>
        </authorList>
    </citation>
    <scope>NUCLEOTIDE SEQUENCE [MRNA]</scope>
</reference>
<reference key="2">
    <citation type="journal article" date="2005" name="Nature">
        <title>Genome sequence, comparative analysis and haplotype structure of the domestic dog.</title>
        <authorList>
            <person name="Lindblad-Toh K."/>
            <person name="Wade C.M."/>
            <person name="Mikkelsen T.S."/>
            <person name="Karlsson E.K."/>
            <person name="Jaffe D.B."/>
            <person name="Kamal M."/>
            <person name="Clamp M."/>
            <person name="Chang J.L."/>
            <person name="Kulbokas E.J. III"/>
            <person name="Zody M.C."/>
            <person name="Mauceli E."/>
            <person name="Xie X."/>
            <person name="Breen M."/>
            <person name="Wayne R.K."/>
            <person name="Ostrander E.A."/>
            <person name="Ponting C.P."/>
            <person name="Galibert F."/>
            <person name="Smith D.R."/>
            <person name="deJong P.J."/>
            <person name="Kirkness E.F."/>
            <person name="Alvarez P."/>
            <person name="Biagi T."/>
            <person name="Brockman W."/>
            <person name="Butler J."/>
            <person name="Chin C.-W."/>
            <person name="Cook A."/>
            <person name="Cuff J."/>
            <person name="Daly M.J."/>
            <person name="DeCaprio D."/>
            <person name="Gnerre S."/>
            <person name="Grabherr M."/>
            <person name="Kellis M."/>
            <person name="Kleber M."/>
            <person name="Bardeleben C."/>
            <person name="Goodstadt L."/>
            <person name="Heger A."/>
            <person name="Hitte C."/>
            <person name="Kim L."/>
            <person name="Koepfli K.-P."/>
            <person name="Parker H.G."/>
            <person name="Pollinger J.P."/>
            <person name="Searle S.M.J."/>
            <person name="Sutter N.B."/>
            <person name="Thomas R."/>
            <person name="Webber C."/>
            <person name="Baldwin J."/>
            <person name="Abebe A."/>
            <person name="Abouelleil A."/>
            <person name="Aftuck L."/>
            <person name="Ait-Zahra M."/>
            <person name="Aldredge T."/>
            <person name="Allen N."/>
            <person name="An P."/>
            <person name="Anderson S."/>
            <person name="Antoine C."/>
            <person name="Arachchi H."/>
            <person name="Aslam A."/>
            <person name="Ayotte L."/>
            <person name="Bachantsang P."/>
            <person name="Barry A."/>
            <person name="Bayul T."/>
            <person name="Benamara M."/>
            <person name="Berlin A."/>
            <person name="Bessette D."/>
            <person name="Blitshteyn B."/>
            <person name="Bloom T."/>
            <person name="Blye J."/>
            <person name="Boguslavskiy L."/>
            <person name="Bonnet C."/>
            <person name="Boukhgalter B."/>
            <person name="Brown A."/>
            <person name="Cahill P."/>
            <person name="Calixte N."/>
            <person name="Camarata J."/>
            <person name="Cheshatsang Y."/>
            <person name="Chu J."/>
            <person name="Citroen M."/>
            <person name="Collymore A."/>
            <person name="Cooke P."/>
            <person name="Dawoe T."/>
            <person name="Daza R."/>
            <person name="Decktor K."/>
            <person name="DeGray S."/>
            <person name="Dhargay N."/>
            <person name="Dooley K."/>
            <person name="Dooley K."/>
            <person name="Dorje P."/>
            <person name="Dorjee K."/>
            <person name="Dorris L."/>
            <person name="Duffey N."/>
            <person name="Dupes A."/>
            <person name="Egbiremolen O."/>
            <person name="Elong R."/>
            <person name="Falk J."/>
            <person name="Farina A."/>
            <person name="Faro S."/>
            <person name="Ferguson D."/>
            <person name="Ferreira P."/>
            <person name="Fisher S."/>
            <person name="FitzGerald M."/>
            <person name="Foley K."/>
            <person name="Foley C."/>
            <person name="Franke A."/>
            <person name="Friedrich D."/>
            <person name="Gage D."/>
            <person name="Garber M."/>
            <person name="Gearin G."/>
            <person name="Giannoukos G."/>
            <person name="Goode T."/>
            <person name="Goyette A."/>
            <person name="Graham J."/>
            <person name="Grandbois E."/>
            <person name="Gyaltsen K."/>
            <person name="Hafez N."/>
            <person name="Hagopian D."/>
            <person name="Hagos B."/>
            <person name="Hall J."/>
            <person name="Healy C."/>
            <person name="Hegarty R."/>
            <person name="Honan T."/>
            <person name="Horn A."/>
            <person name="Houde N."/>
            <person name="Hughes L."/>
            <person name="Hunnicutt L."/>
            <person name="Husby M."/>
            <person name="Jester B."/>
            <person name="Jones C."/>
            <person name="Kamat A."/>
            <person name="Kanga B."/>
            <person name="Kells C."/>
            <person name="Khazanovich D."/>
            <person name="Kieu A.C."/>
            <person name="Kisner P."/>
            <person name="Kumar M."/>
            <person name="Lance K."/>
            <person name="Landers T."/>
            <person name="Lara M."/>
            <person name="Lee W."/>
            <person name="Leger J.-P."/>
            <person name="Lennon N."/>
            <person name="Leuper L."/>
            <person name="LeVine S."/>
            <person name="Liu J."/>
            <person name="Liu X."/>
            <person name="Lokyitsang Y."/>
            <person name="Lokyitsang T."/>
            <person name="Lui A."/>
            <person name="Macdonald J."/>
            <person name="Major J."/>
            <person name="Marabella R."/>
            <person name="Maru K."/>
            <person name="Matthews C."/>
            <person name="McDonough S."/>
            <person name="Mehta T."/>
            <person name="Meldrim J."/>
            <person name="Melnikov A."/>
            <person name="Meneus L."/>
            <person name="Mihalev A."/>
            <person name="Mihova T."/>
            <person name="Miller K."/>
            <person name="Mittelman R."/>
            <person name="Mlenga V."/>
            <person name="Mulrain L."/>
            <person name="Munson G."/>
            <person name="Navidi A."/>
            <person name="Naylor J."/>
            <person name="Nguyen T."/>
            <person name="Nguyen N."/>
            <person name="Nguyen C."/>
            <person name="Nguyen T."/>
            <person name="Nicol R."/>
            <person name="Norbu N."/>
            <person name="Norbu C."/>
            <person name="Novod N."/>
            <person name="Nyima T."/>
            <person name="Olandt P."/>
            <person name="O'Neill B."/>
            <person name="O'Neill K."/>
            <person name="Osman S."/>
            <person name="Oyono L."/>
            <person name="Patti C."/>
            <person name="Perrin D."/>
            <person name="Phunkhang P."/>
            <person name="Pierre F."/>
            <person name="Priest M."/>
            <person name="Rachupka A."/>
            <person name="Raghuraman S."/>
            <person name="Rameau R."/>
            <person name="Ray V."/>
            <person name="Raymond C."/>
            <person name="Rege F."/>
            <person name="Rise C."/>
            <person name="Rogers J."/>
            <person name="Rogov P."/>
            <person name="Sahalie J."/>
            <person name="Settipalli S."/>
            <person name="Sharpe T."/>
            <person name="Shea T."/>
            <person name="Sheehan M."/>
            <person name="Sherpa N."/>
            <person name="Shi J."/>
            <person name="Shih D."/>
            <person name="Sloan J."/>
            <person name="Smith C."/>
            <person name="Sparrow T."/>
            <person name="Stalker J."/>
            <person name="Stange-Thomann N."/>
            <person name="Stavropoulos S."/>
            <person name="Stone C."/>
            <person name="Stone S."/>
            <person name="Sykes S."/>
            <person name="Tchuinga P."/>
            <person name="Tenzing P."/>
            <person name="Tesfaye S."/>
            <person name="Thoulutsang D."/>
            <person name="Thoulutsang Y."/>
            <person name="Topham K."/>
            <person name="Topping I."/>
            <person name="Tsamla T."/>
            <person name="Vassiliev H."/>
            <person name="Venkataraman V."/>
            <person name="Vo A."/>
            <person name="Wangchuk T."/>
            <person name="Wangdi T."/>
            <person name="Weiand M."/>
            <person name="Wilkinson J."/>
            <person name="Wilson A."/>
            <person name="Yadav S."/>
            <person name="Yang S."/>
            <person name="Yang X."/>
            <person name="Young G."/>
            <person name="Yu Q."/>
            <person name="Zainoun J."/>
            <person name="Zembek L."/>
            <person name="Zimmer A."/>
            <person name="Lander E.S."/>
        </authorList>
    </citation>
    <scope>NUCLEOTIDE SEQUENCE [LARGE SCALE GENOMIC DNA]</scope>
    <source>
        <strain>Boxer</strain>
    </source>
</reference>
<reference key="3">
    <citation type="journal article" date="1997" name="Electrophoresis">
        <title>HSC-2DPAGE and the two-dimensional gel electrophoresis database of dog heart proteins.</title>
        <authorList>
            <person name="Dunn M.J."/>
            <person name="Corbett J.M."/>
            <person name="Wheeler C.H."/>
        </authorList>
    </citation>
    <scope>PROTEIN SEQUENCE OF 528-546</scope>
    <source>
        <tissue>Heart</tissue>
    </source>
</reference>
<gene>
    <name evidence="2" type="primary">ATP5F1B</name>
    <name type="synonym">ATP5B</name>
</gene>
<proteinExistence type="evidence at protein level"/>
<sequence length="546" mass="58142">MLGFVGRVAATSASGALRGLGPSPLPQVKVLLRASPAALQSARDYATQTSPSPKAGAATGRIVAVIGAVVDVQFDEGLPPILNALEVQGRETRLVLEVAQHLGESTVRTIAMDGTEGLVRGQKVLDSGAPIKIPVGPETLGRIMNVIGEPIDERGPIKTKQFAAIHAEAPEFVEMSVEQEILVTGIKVVDLLAPYAKGGKIGLFGGAGVGKTVLIMELINNVAKAHGGYSVFAGVGERTREGNDLYHEMIESGVINLKDATSKVALVYGQMNEPPGARARVALTGLTVAEYFRDQEGQDVLLFIDNIFRFTQAGSEVSALLGRIPSAVGYQPTLATDMGTMQERITTTKKGSITSVQAIYVPADDLTDPAPATTFAHLDATTVLSRAIAELGIYPAVDPLDSTSRIMDPNIVGNEHYDVARGVQKILQDYKSLQDIIAILGMDELSEEDKLTVSRARKIQRFLSQPFQVAEVFTGHMGKLVPLKETIKGFQQILAGEYDHLPEQAFYMVGPIEEAVAKADKLAEEHSATQTSPSPKGAAAXXXRVV</sequence>
<feature type="transit peptide" description="Mitochondrion" evidence="6">
    <location>
        <begin position="1"/>
        <end position="45"/>
    </location>
</feature>
<feature type="chain" id="PRO_0000144557" description="ATP synthase F(1) complex catalytic subunit beta, mitochondrial">
    <location>
        <begin position="46"/>
        <end position="546"/>
    </location>
</feature>
<feature type="region of interest" description="Disordered" evidence="7">
    <location>
        <begin position="521"/>
        <end position="546"/>
    </location>
</feature>
<feature type="binding site" evidence="1">
    <location>
        <position position="208"/>
    </location>
    <ligand>
        <name>ADP</name>
        <dbReference type="ChEBI" id="CHEBI:456216"/>
    </ligand>
</feature>
<feature type="binding site" evidence="1">
    <location>
        <position position="208"/>
    </location>
    <ligand>
        <name>ATP</name>
        <dbReference type="ChEBI" id="CHEBI:30616"/>
    </ligand>
</feature>
<feature type="binding site" evidence="1">
    <location>
        <position position="208"/>
    </location>
    <ligand>
        <name>phosphate</name>
        <dbReference type="ChEBI" id="CHEBI:43474"/>
    </ligand>
</feature>
<feature type="binding site" evidence="1">
    <location>
        <position position="209"/>
    </location>
    <ligand>
        <name>ADP</name>
        <dbReference type="ChEBI" id="CHEBI:456216"/>
    </ligand>
</feature>
<feature type="binding site" evidence="1">
    <location>
        <position position="209"/>
    </location>
    <ligand>
        <name>phosphate</name>
        <dbReference type="ChEBI" id="CHEBI:43474"/>
    </ligand>
</feature>
<feature type="binding site" evidence="1">
    <location>
        <position position="210"/>
    </location>
    <ligand>
        <name>ADP</name>
        <dbReference type="ChEBI" id="CHEBI:456216"/>
    </ligand>
</feature>
<feature type="binding site" evidence="1">
    <location>
        <position position="210"/>
    </location>
    <ligand>
        <name>ATP</name>
        <dbReference type="ChEBI" id="CHEBI:30616"/>
    </ligand>
</feature>
<feature type="binding site" evidence="1">
    <location>
        <position position="210"/>
    </location>
    <ligand>
        <name>phosphate</name>
        <dbReference type="ChEBI" id="CHEBI:43474"/>
    </ligand>
</feature>
<feature type="binding site" evidence="1">
    <location>
        <position position="211"/>
    </location>
    <ligand>
        <name>ADP</name>
        <dbReference type="ChEBI" id="CHEBI:456216"/>
    </ligand>
</feature>
<feature type="binding site" evidence="1">
    <location>
        <position position="211"/>
    </location>
    <ligand>
        <name>ATP</name>
        <dbReference type="ChEBI" id="CHEBI:30616"/>
    </ligand>
</feature>
<feature type="binding site" evidence="1">
    <location>
        <position position="211"/>
    </location>
    <ligand>
        <name>phosphate</name>
        <dbReference type="ChEBI" id="CHEBI:43474"/>
    </ligand>
</feature>
<feature type="binding site" evidence="1">
    <location>
        <position position="212"/>
    </location>
    <ligand>
        <name>ADP</name>
        <dbReference type="ChEBI" id="CHEBI:456216"/>
    </ligand>
</feature>
<feature type="binding site" evidence="1">
    <location>
        <position position="212"/>
    </location>
    <ligand>
        <name>ATP</name>
        <dbReference type="ChEBI" id="CHEBI:30616"/>
    </ligand>
</feature>
<feature type="binding site" evidence="1">
    <location>
        <position position="212"/>
    </location>
    <ligand>
        <name>Mg(2+)</name>
        <dbReference type="ChEBI" id="CHEBI:18420"/>
        <label>1</label>
        <note>ligand shared between two neighboring subunits</note>
    </ligand>
</feature>
<feature type="binding site" evidence="1">
    <location>
        <position position="212"/>
    </location>
    <ligand>
        <name>phosphate</name>
        <dbReference type="ChEBI" id="CHEBI:43474"/>
    </ligand>
</feature>
<feature type="binding site" evidence="1">
    <location>
        <position position="213"/>
    </location>
    <ligand>
        <name>ADP</name>
        <dbReference type="ChEBI" id="CHEBI:456216"/>
    </ligand>
</feature>
<feature type="binding site" evidence="1">
    <location>
        <position position="213"/>
    </location>
    <ligand>
        <name>ATP</name>
        <dbReference type="ChEBI" id="CHEBI:30616"/>
    </ligand>
</feature>
<feature type="binding site" evidence="1">
    <location>
        <position position="237"/>
    </location>
    <ligand>
        <name>Mg(2+)</name>
        <dbReference type="ChEBI" id="CHEBI:18420"/>
        <label>2</label>
        <note>ligand shared between two neighboring subunits</note>
    </ligand>
</feature>
<feature type="binding site" evidence="1">
    <location>
        <position position="238"/>
    </location>
    <ligand>
        <name>ATP</name>
        <dbReference type="ChEBI" id="CHEBI:30616"/>
    </ligand>
</feature>
<feature type="modified residue" description="N6-acetyllysine; alternate" evidence="5">
    <location>
        <position position="123"/>
    </location>
</feature>
<feature type="modified residue" description="N6-succinyllysine; alternate" evidence="5">
    <location>
        <position position="123"/>
    </location>
</feature>
<feature type="modified residue" description="N6-acetyllysine; alternate" evidence="2">
    <location>
        <position position="132"/>
    </location>
</feature>
<feature type="modified residue" description="N6-succinyllysine; alternate" evidence="5">
    <location>
        <position position="132"/>
    </location>
</feature>
<feature type="modified residue" description="N6-acetyllysine; alternate" evidence="5">
    <location>
        <position position="160"/>
    </location>
</feature>
<feature type="modified residue" description="N6-succinyllysine; alternate" evidence="5">
    <location>
        <position position="160"/>
    </location>
</feature>
<feature type="modified residue" description="N6-acetyllysine" evidence="2">
    <location>
        <position position="197"/>
    </location>
</feature>
<feature type="modified residue" description="N6-acetyllysine; alternate" evidence="5">
    <location>
        <position position="258"/>
    </location>
</feature>
<feature type="modified residue" description="N6-succinyllysine; alternate" evidence="5">
    <location>
        <position position="258"/>
    </location>
</feature>
<feature type="modified residue" description="N6-acetyllysine; alternate" evidence="5">
    <location>
        <position position="263"/>
    </location>
</feature>
<feature type="modified residue" description="N6-succinyllysine; alternate" evidence="5">
    <location>
        <position position="263"/>
    </location>
</feature>
<feature type="modified residue" description="Phosphothreonine" evidence="5">
    <location>
        <position position="311"/>
    </location>
</feature>
<feature type="modified residue" description="N6-acetyllysine" evidence="2">
    <location>
        <position position="425"/>
    </location>
</feature>
<feature type="modified residue" description="Phosphoserine" evidence="3">
    <location>
        <position position="432"/>
    </location>
</feature>
<feature type="modified residue" description="N6-acetyllysine" evidence="5">
    <location>
        <position position="479"/>
    </location>
</feature>
<feature type="modified residue" description="N6-acetyllysine" evidence="5">
    <location>
        <position position="484"/>
    </location>
</feature>
<feature type="modified residue" description="N6-acetyllysine; alternate" evidence="5">
    <location>
        <position position="521"/>
    </location>
</feature>
<feature type="modified residue" description="N6-succinyllysine; alternate" evidence="5">
    <location>
        <position position="521"/>
    </location>
</feature>
<accession>P99504</accession>
<accession>A0A1B1X468</accession>